<protein>
    <recommendedName>
        <fullName evidence="1">Small ribosomal subunit protein uS11</fullName>
    </recommendedName>
    <alternativeName>
        <fullName evidence="2">30S ribosomal protein S11</fullName>
    </alternativeName>
</protein>
<dbReference type="EMBL" id="AP009510">
    <property type="protein sequence ID" value="BAG13590.1"/>
    <property type="molecule type" value="Genomic_DNA"/>
</dbReference>
<dbReference type="RefSeq" id="WP_015423119.1">
    <property type="nucleotide sequence ID" value="NC_020419.1"/>
</dbReference>
<dbReference type="SMR" id="B1GZA8"/>
<dbReference type="STRING" id="471821.TGRD_107"/>
<dbReference type="KEGG" id="rsd:TGRD_107"/>
<dbReference type="PATRIC" id="fig|471821.5.peg.151"/>
<dbReference type="HOGENOM" id="CLU_072439_5_0_0"/>
<dbReference type="Proteomes" id="UP000001691">
    <property type="component" value="Chromosome"/>
</dbReference>
<dbReference type="GO" id="GO:1990904">
    <property type="term" value="C:ribonucleoprotein complex"/>
    <property type="evidence" value="ECO:0007669"/>
    <property type="project" value="UniProtKB-KW"/>
</dbReference>
<dbReference type="GO" id="GO:0005840">
    <property type="term" value="C:ribosome"/>
    <property type="evidence" value="ECO:0007669"/>
    <property type="project" value="UniProtKB-KW"/>
</dbReference>
<dbReference type="GO" id="GO:0019843">
    <property type="term" value="F:rRNA binding"/>
    <property type="evidence" value="ECO:0007669"/>
    <property type="project" value="UniProtKB-UniRule"/>
</dbReference>
<dbReference type="GO" id="GO:0003735">
    <property type="term" value="F:structural constituent of ribosome"/>
    <property type="evidence" value="ECO:0007669"/>
    <property type="project" value="InterPro"/>
</dbReference>
<dbReference type="GO" id="GO:0006412">
    <property type="term" value="P:translation"/>
    <property type="evidence" value="ECO:0007669"/>
    <property type="project" value="UniProtKB-UniRule"/>
</dbReference>
<dbReference type="FunFam" id="3.30.420.80:FF:000010">
    <property type="entry name" value="30S ribosomal protein S11"/>
    <property type="match status" value="1"/>
</dbReference>
<dbReference type="Gene3D" id="3.30.420.80">
    <property type="entry name" value="Ribosomal protein S11"/>
    <property type="match status" value="1"/>
</dbReference>
<dbReference type="HAMAP" id="MF_01310">
    <property type="entry name" value="Ribosomal_uS11"/>
    <property type="match status" value="1"/>
</dbReference>
<dbReference type="InterPro" id="IPR001971">
    <property type="entry name" value="Ribosomal_uS11"/>
</dbReference>
<dbReference type="InterPro" id="IPR019981">
    <property type="entry name" value="Ribosomal_uS11_bac-type"/>
</dbReference>
<dbReference type="InterPro" id="IPR018102">
    <property type="entry name" value="Ribosomal_uS11_CS"/>
</dbReference>
<dbReference type="InterPro" id="IPR036967">
    <property type="entry name" value="Ribosomal_uS11_sf"/>
</dbReference>
<dbReference type="NCBIfam" id="NF003698">
    <property type="entry name" value="PRK05309.1"/>
    <property type="match status" value="1"/>
</dbReference>
<dbReference type="NCBIfam" id="TIGR03632">
    <property type="entry name" value="uS11_bact"/>
    <property type="match status" value="1"/>
</dbReference>
<dbReference type="PANTHER" id="PTHR11759">
    <property type="entry name" value="40S RIBOSOMAL PROTEIN S14/30S RIBOSOMAL PROTEIN S11"/>
    <property type="match status" value="1"/>
</dbReference>
<dbReference type="Pfam" id="PF00411">
    <property type="entry name" value="Ribosomal_S11"/>
    <property type="match status" value="1"/>
</dbReference>
<dbReference type="PIRSF" id="PIRSF002131">
    <property type="entry name" value="Ribosomal_S11"/>
    <property type="match status" value="1"/>
</dbReference>
<dbReference type="SUPFAM" id="SSF53137">
    <property type="entry name" value="Translational machinery components"/>
    <property type="match status" value="1"/>
</dbReference>
<dbReference type="PROSITE" id="PS00054">
    <property type="entry name" value="RIBOSOMAL_S11"/>
    <property type="match status" value="1"/>
</dbReference>
<feature type="chain" id="PRO_1000165579" description="Small ribosomal subunit protein uS11">
    <location>
        <begin position="1"/>
        <end position="131"/>
    </location>
</feature>
<proteinExistence type="inferred from homology"/>
<reference key="1">
    <citation type="journal article" date="2008" name="Proc. Natl. Acad. Sci. U.S.A.">
        <title>Complete genome of the uncultured termite group 1 bacteria in a single host protist cell.</title>
        <authorList>
            <person name="Hongoh Y."/>
            <person name="Sharma V.K."/>
            <person name="Prakash T."/>
            <person name="Noda S."/>
            <person name="Taylor T.D."/>
            <person name="Kudo T."/>
            <person name="Sakaki Y."/>
            <person name="Toyoda A."/>
            <person name="Hattori M."/>
            <person name="Ohkuma M."/>
        </authorList>
    </citation>
    <scope>NUCLEOTIDE SEQUENCE [LARGE SCALE GENOMIC DNA]</scope>
</reference>
<organism>
    <name type="scientific">Endomicrobium trichonymphae</name>
    <dbReference type="NCBI Taxonomy" id="1408204"/>
    <lineage>
        <taxon>Bacteria</taxon>
        <taxon>Pseudomonadati</taxon>
        <taxon>Elusimicrobiota</taxon>
        <taxon>Endomicrobiia</taxon>
        <taxon>Endomicrobiales</taxon>
        <taxon>Endomicrobiaceae</taxon>
        <taxon>Candidatus Endomicrobiellum</taxon>
    </lineage>
</organism>
<sequence length="131" mass="13601">MAGEKNAVGSSKKKKYTGGVAKAYILSTFNNTIVNITDEKGNTLAWASAGVSGFKGTKKGTPFAAQMTAASVGRKVMGIGVKQIAIFIKGPGPGRETAIRGLQSSGLGITTIKDITPVPHDGCRPPKLRRV</sequence>
<name>RS11_ENDTX</name>
<comment type="function">
    <text evidence="1">Located on the platform of the 30S subunit, it bridges several disparate RNA helices of the 16S rRNA. Forms part of the Shine-Dalgarno cleft in the 70S ribosome.</text>
</comment>
<comment type="subunit">
    <text evidence="1">Part of the 30S ribosomal subunit. Interacts with proteins S7 and S18. Binds to IF-3.</text>
</comment>
<comment type="similarity">
    <text evidence="1">Belongs to the universal ribosomal protein uS11 family.</text>
</comment>
<gene>
    <name evidence="1" type="primary">rpsK</name>
    <name type="ordered locus">TGRD_107</name>
</gene>
<keyword id="KW-0687">Ribonucleoprotein</keyword>
<keyword id="KW-0689">Ribosomal protein</keyword>
<keyword id="KW-0694">RNA-binding</keyword>
<keyword id="KW-0699">rRNA-binding</keyword>
<evidence type="ECO:0000255" key="1">
    <source>
        <dbReference type="HAMAP-Rule" id="MF_01310"/>
    </source>
</evidence>
<evidence type="ECO:0000305" key="2"/>
<accession>B1GZA8</accession>